<protein>
    <recommendedName>
        <fullName>Thyrotroph embryonic factor</fullName>
    </recommendedName>
</protein>
<reference key="1">
    <citation type="journal article" date="2000" name="J. Biol. Chem.">
        <title>Involvement of thyrotroph embryonic factor in calcium-mediated regulation of gene expression.</title>
        <authorList>
            <person name="Krueger D.A."/>
            <person name="Warner E.A."/>
            <person name="Dowd D.R."/>
        </authorList>
    </citation>
    <scope>NUCLEOTIDE SEQUENCE [MRNA] (ISOFORM ALPHA)</scope>
    <source>
        <strain>BALB/cJ</strain>
        <tissue>Brain</tissue>
    </source>
</reference>
<reference key="2">
    <citation type="journal article" date="2004" name="J. Biol. Chem.">
        <title>Activation of the smooth muscle-specific telokin gene by thyrotroph embryonic factor (TEF).</title>
        <authorList>
            <person name="Zhou J."/>
            <person name="Hoggatt A.M."/>
            <person name="Herring B.P."/>
        </authorList>
    </citation>
    <scope>NUCLEOTIDE SEQUENCE [MRNA] (ISOFORMS ALPHA AND BETA)</scope>
    <scope>ALTERNATIVE PROMOTER USAGE</scope>
</reference>
<reference key="3">
    <citation type="journal article" date="2005" name="Science">
        <title>The transcriptional landscape of the mammalian genome.</title>
        <authorList>
            <person name="Carninci P."/>
            <person name="Kasukawa T."/>
            <person name="Katayama S."/>
            <person name="Gough J."/>
            <person name="Frith M.C."/>
            <person name="Maeda N."/>
            <person name="Oyama R."/>
            <person name="Ravasi T."/>
            <person name="Lenhard B."/>
            <person name="Wells C."/>
            <person name="Kodzius R."/>
            <person name="Shimokawa K."/>
            <person name="Bajic V.B."/>
            <person name="Brenner S.E."/>
            <person name="Batalov S."/>
            <person name="Forrest A.R."/>
            <person name="Zavolan M."/>
            <person name="Davis M.J."/>
            <person name="Wilming L.G."/>
            <person name="Aidinis V."/>
            <person name="Allen J.E."/>
            <person name="Ambesi-Impiombato A."/>
            <person name="Apweiler R."/>
            <person name="Aturaliya R.N."/>
            <person name="Bailey T.L."/>
            <person name="Bansal M."/>
            <person name="Baxter L."/>
            <person name="Beisel K.W."/>
            <person name="Bersano T."/>
            <person name="Bono H."/>
            <person name="Chalk A.M."/>
            <person name="Chiu K.P."/>
            <person name="Choudhary V."/>
            <person name="Christoffels A."/>
            <person name="Clutterbuck D.R."/>
            <person name="Crowe M.L."/>
            <person name="Dalla E."/>
            <person name="Dalrymple B.P."/>
            <person name="de Bono B."/>
            <person name="Della Gatta G."/>
            <person name="di Bernardo D."/>
            <person name="Down T."/>
            <person name="Engstrom P."/>
            <person name="Fagiolini M."/>
            <person name="Faulkner G."/>
            <person name="Fletcher C.F."/>
            <person name="Fukushima T."/>
            <person name="Furuno M."/>
            <person name="Futaki S."/>
            <person name="Gariboldi M."/>
            <person name="Georgii-Hemming P."/>
            <person name="Gingeras T.R."/>
            <person name="Gojobori T."/>
            <person name="Green R.E."/>
            <person name="Gustincich S."/>
            <person name="Harbers M."/>
            <person name="Hayashi Y."/>
            <person name="Hensch T.K."/>
            <person name="Hirokawa N."/>
            <person name="Hill D."/>
            <person name="Huminiecki L."/>
            <person name="Iacono M."/>
            <person name="Ikeo K."/>
            <person name="Iwama A."/>
            <person name="Ishikawa T."/>
            <person name="Jakt M."/>
            <person name="Kanapin A."/>
            <person name="Katoh M."/>
            <person name="Kawasawa Y."/>
            <person name="Kelso J."/>
            <person name="Kitamura H."/>
            <person name="Kitano H."/>
            <person name="Kollias G."/>
            <person name="Krishnan S.P."/>
            <person name="Kruger A."/>
            <person name="Kummerfeld S.K."/>
            <person name="Kurochkin I.V."/>
            <person name="Lareau L.F."/>
            <person name="Lazarevic D."/>
            <person name="Lipovich L."/>
            <person name="Liu J."/>
            <person name="Liuni S."/>
            <person name="McWilliam S."/>
            <person name="Madan Babu M."/>
            <person name="Madera M."/>
            <person name="Marchionni L."/>
            <person name="Matsuda H."/>
            <person name="Matsuzawa S."/>
            <person name="Miki H."/>
            <person name="Mignone F."/>
            <person name="Miyake S."/>
            <person name="Morris K."/>
            <person name="Mottagui-Tabar S."/>
            <person name="Mulder N."/>
            <person name="Nakano N."/>
            <person name="Nakauchi H."/>
            <person name="Ng P."/>
            <person name="Nilsson R."/>
            <person name="Nishiguchi S."/>
            <person name="Nishikawa S."/>
            <person name="Nori F."/>
            <person name="Ohara O."/>
            <person name="Okazaki Y."/>
            <person name="Orlando V."/>
            <person name="Pang K.C."/>
            <person name="Pavan W.J."/>
            <person name="Pavesi G."/>
            <person name="Pesole G."/>
            <person name="Petrovsky N."/>
            <person name="Piazza S."/>
            <person name="Reed J."/>
            <person name="Reid J.F."/>
            <person name="Ring B.Z."/>
            <person name="Ringwald M."/>
            <person name="Rost B."/>
            <person name="Ruan Y."/>
            <person name="Salzberg S.L."/>
            <person name="Sandelin A."/>
            <person name="Schneider C."/>
            <person name="Schoenbach C."/>
            <person name="Sekiguchi K."/>
            <person name="Semple C.A."/>
            <person name="Seno S."/>
            <person name="Sessa L."/>
            <person name="Sheng Y."/>
            <person name="Shibata Y."/>
            <person name="Shimada H."/>
            <person name="Shimada K."/>
            <person name="Silva D."/>
            <person name="Sinclair B."/>
            <person name="Sperling S."/>
            <person name="Stupka E."/>
            <person name="Sugiura K."/>
            <person name="Sultana R."/>
            <person name="Takenaka Y."/>
            <person name="Taki K."/>
            <person name="Tammoja K."/>
            <person name="Tan S.L."/>
            <person name="Tang S."/>
            <person name="Taylor M.S."/>
            <person name="Tegner J."/>
            <person name="Teichmann S.A."/>
            <person name="Ueda H.R."/>
            <person name="van Nimwegen E."/>
            <person name="Verardo R."/>
            <person name="Wei C.L."/>
            <person name="Yagi K."/>
            <person name="Yamanishi H."/>
            <person name="Zabarovsky E."/>
            <person name="Zhu S."/>
            <person name="Zimmer A."/>
            <person name="Hide W."/>
            <person name="Bult C."/>
            <person name="Grimmond S.M."/>
            <person name="Teasdale R.D."/>
            <person name="Liu E.T."/>
            <person name="Brusic V."/>
            <person name="Quackenbush J."/>
            <person name="Wahlestedt C."/>
            <person name="Mattick J.S."/>
            <person name="Hume D.A."/>
            <person name="Kai C."/>
            <person name="Sasaki D."/>
            <person name="Tomaru Y."/>
            <person name="Fukuda S."/>
            <person name="Kanamori-Katayama M."/>
            <person name="Suzuki M."/>
            <person name="Aoki J."/>
            <person name="Arakawa T."/>
            <person name="Iida J."/>
            <person name="Imamura K."/>
            <person name="Itoh M."/>
            <person name="Kato T."/>
            <person name="Kawaji H."/>
            <person name="Kawagashira N."/>
            <person name="Kawashima T."/>
            <person name="Kojima M."/>
            <person name="Kondo S."/>
            <person name="Konno H."/>
            <person name="Nakano K."/>
            <person name="Ninomiya N."/>
            <person name="Nishio T."/>
            <person name="Okada M."/>
            <person name="Plessy C."/>
            <person name="Shibata K."/>
            <person name="Shiraki T."/>
            <person name="Suzuki S."/>
            <person name="Tagami M."/>
            <person name="Waki K."/>
            <person name="Watahiki A."/>
            <person name="Okamura-Oho Y."/>
            <person name="Suzuki H."/>
            <person name="Kawai J."/>
            <person name="Hayashizaki Y."/>
        </authorList>
    </citation>
    <scope>NUCLEOTIDE SEQUENCE [LARGE SCALE MRNA] (ISOFORMS ALPHA AND BETA)</scope>
    <source>
        <strain>C57BL/6J</strain>
        <strain>NOD</strain>
        <tissue>Hippocampus</tissue>
        <tissue>Kidney</tissue>
        <tissue>Mammary gland</tissue>
    </source>
</reference>
<reference key="4">
    <citation type="journal article" date="2004" name="Genome Res.">
        <title>The status, quality, and expansion of the NIH full-length cDNA project: the Mammalian Gene Collection (MGC).</title>
        <authorList>
            <consortium name="The MGC Project Team"/>
        </authorList>
    </citation>
    <scope>NUCLEOTIDE SEQUENCE [LARGE SCALE MRNA] (ISOFORMS ALPHA AND 2)</scope>
    <source>
        <strain>FVB/N</strain>
        <tissue>Kidney</tissue>
        <tissue>Mammary tumor</tissue>
    </source>
</reference>
<reference key="5">
    <citation type="journal article" date="1996" name="EMBO J.">
        <title>The two PAR leucine zipper proteins, TEF and DBP, display similar circadian and tissue-specific expression, but have different target promoter preferences.</title>
        <authorList>
            <person name="Fonjallaz P."/>
            <person name="Ossipow V."/>
            <person name="Wanner G."/>
            <person name="Schibler U."/>
        </authorList>
    </citation>
    <scope>CIRCADIAN INDUCTION</scope>
</reference>
<reference key="6">
    <citation type="journal article" date="2004" name="Genes Dev.">
        <title>The loss of circadian PAR bZip transcription factors results in epilepsy.</title>
        <authorList>
            <person name="Gachon F."/>
            <person name="Fonjallaz P."/>
            <person name="Damiola F."/>
            <person name="Gos P."/>
            <person name="Kodama T."/>
            <person name="Zakany J."/>
            <person name="Duboule D."/>
            <person name="Petit B."/>
            <person name="Tafti M."/>
            <person name="Schibler U."/>
        </authorList>
    </citation>
    <scope>INVOLVEMENT IN EPILEPSY</scope>
</reference>
<comment type="function">
    <text evidence="1">Transcription factor that binds to and transactivates the TSHB promoter. Binds to a minimal DNA-binding sequence 5'-[TC][AG][AG]TTA[TC][AG]-3' (By similarity). Also activates the telokin promoter in smooth muscle-specific and calcium-dependent manner.</text>
</comment>
<comment type="subunit">
    <text evidence="1">Binds DNA as a homodimer or a heterodimer. Can form a heterodimer with DBP (By similarity).</text>
</comment>
<comment type="subcellular location">
    <subcellularLocation>
        <location evidence="8">Nucleus</location>
    </subcellularLocation>
</comment>
<comment type="alternative products">
    <event type="alternative promoter"/>
    <isoform>
        <id>Q9JLC6-1</id>
        <name>Alpha</name>
        <sequence type="displayed"/>
    </isoform>
    <isoform>
        <id>Q9JLC6-2</id>
        <name>Beta</name>
        <sequence type="described" ref="VSP_011245"/>
    </isoform>
    <isoform>
        <id>Q9JLC6-3</id>
        <name>2</name>
        <sequence type="described" ref="VSP_011246"/>
    </isoform>
</comment>
<comment type="tissue specificity">
    <text>Isoform Alpha and isoform Beta are expressed at high levels in lung, bladder, kidney, gut and brain.</text>
</comment>
<comment type="induction">
    <text>Accumulates according to a robust circadian rhythm in liver and kidney. In liver nuclei, the amplitude of daily oscillation has been estimated to be 9-fold. Expressed at nearly constant level in the brain.</text>
</comment>
<comment type="miscellaneous">
    <text>Mice deficient for all three PAR bZIP proteins (DBP, HLF and TEF) display a dramatically shortened life span and are highly susceptible to generalized spontaneous and audiogenic epilepsies (due for example to the noise of a vacuum cleaner) that are frequently lethal. The down-regulation of pyridoxal kinase (Pdxk) expression in these mice may participate in this seizure phenotype.</text>
</comment>
<comment type="similarity">
    <text evidence="8">Belongs to the bZIP family. PAR subfamily.</text>
</comment>
<keyword id="KW-0010">Activator</keyword>
<keyword id="KW-0877">Alternative promoter usage</keyword>
<keyword id="KW-0090">Biological rhythms</keyword>
<keyword id="KW-0238">DNA-binding</keyword>
<keyword id="KW-0539">Nucleus</keyword>
<keyword id="KW-0597">Phosphoprotein</keyword>
<keyword id="KW-1185">Reference proteome</keyword>
<keyword id="KW-0804">Transcription</keyword>
<keyword id="KW-0805">Transcription regulation</keyword>
<dbReference type="EMBL" id="AF194420">
    <property type="protein sequence ID" value="AAF70830.1"/>
    <property type="molecule type" value="mRNA"/>
</dbReference>
<dbReference type="EMBL" id="AY540631">
    <property type="protein sequence ID" value="AAS45599.1"/>
    <property type="molecule type" value="mRNA"/>
</dbReference>
<dbReference type="EMBL" id="AY540632">
    <property type="protein sequence ID" value="AAS45600.1"/>
    <property type="molecule type" value="mRNA"/>
</dbReference>
<dbReference type="EMBL" id="AK075601">
    <property type="protein sequence ID" value="BAC35849.1"/>
    <property type="molecule type" value="mRNA"/>
</dbReference>
<dbReference type="EMBL" id="AK141606">
    <property type="protein sequence ID" value="BAE24760.1"/>
    <property type="molecule type" value="mRNA"/>
</dbReference>
<dbReference type="EMBL" id="AK145125">
    <property type="protein sequence ID" value="BAE26249.1"/>
    <property type="molecule type" value="mRNA"/>
</dbReference>
<dbReference type="EMBL" id="AK147965">
    <property type="protein sequence ID" value="BAE28255.1"/>
    <property type="molecule type" value="mRNA"/>
</dbReference>
<dbReference type="EMBL" id="AK154472">
    <property type="protein sequence ID" value="BAE32609.1"/>
    <property type="molecule type" value="mRNA"/>
</dbReference>
<dbReference type="EMBL" id="BC017689">
    <property type="protein sequence ID" value="AAH17689.1"/>
    <property type="molecule type" value="mRNA"/>
</dbReference>
<dbReference type="EMBL" id="BC036982">
    <property type="protein sequence ID" value="AAH36982.1"/>
    <property type="molecule type" value="mRNA"/>
</dbReference>
<dbReference type="CCDS" id="CCDS27671.2">
    <molecule id="Q9JLC6-2"/>
</dbReference>
<dbReference type="CCDS" id="CCDS27672.1">
    <molecule id="Q9JLC6-1"/>
</dbReference>
<dbReference type="RefSeq" id="NP_059072.1">
    <molecule id="Q9JLC6-1"/>
    <property type="nucleotide sequence ID" value="NM_017376.3"/>
</dbReference>
<dbReference type="RefSeq" id="NP_705617.2">
    <molecule id="Q9JLC6-2"/>
    <property type="nucleotide sequence ID" value="NM_153484.3"/>
</dbReference>
<dbReference type="SMR" id="Q9JLC6"/>
<dbReference type="BioGRID" id="204106">
    <property type="interactions" value="3"/>
</dbReference>
<dbReference type="FunCoup" id="Q9JLC6">
    <property type="interactions" value="1217"/>
</dbReference>
<dbReference type="IntAct" id="Q9JLC6">
    <property type="interactions" value="2"/>
</dbReference>
<dbReference type="STRING" id="10090.ENSMUSP00000023024"/>
<dbReference type="iPTMnet" id="Q9JLC6"/>
<dbReference type="PhosphoSitePlus" id="Q9JLC6"/>
<dbReference type="PaxDb" id="10090-ENSMUSP00000023024"/>
<dbReference type="ProteomicsDB" id="263030">
    <molecule id="Q9JLC6-1"/>
</dbReference>
<dbReference type="ProteomicsDB" id="263031">
    <molecule id="Q9JLC6-2"/>
</dbReference>
<dbReference type="ProteomicsDB" id="263032">
    <molecule id="Q9JLC6-3"/>
</dbReference>
<dbReference type="Antibodypedia" id="26917">
    <property type="antibodies" value="170 antibodies from 25 providers"/>
</dbReference>
<dbReference type="DNASU" id="21685"/>
<dbReference type="Ensembl" id="ENSMUST00000023024.8">
    <molecule id="Q9JLC6-1"/>
    <property type="protein sequence ID" value="ENSMUSP00000023024.8"/>
    <property type="gene ID" value="ENSMUSG00000022389.16"/>
</dbReference>
<dbReference type="Ensembl" id="ENSMUST00000109553.10">
    <molecule id="Q9JLC6-2"/>
    <property type="protein sequence ID" value="ENSMUSP00000105180.3"/>
    <property type="gene ID" value="ENSMUSG00000022389.16"/>
</dbReference>
<dbReference type="GeneID" id="21685"/>
<dbReference type="KEGG" id="mmu:21685"/>
<dbReference type="UCSC" id="uc007wxj.2">
    <molecule id="Q9JLC6-2"/>
    <property type="organism name" value="mouse"/>
</dbReference>
<dbReference type="UCSC" id="uc007wxk.2">
    <molecule id="Q9JLC6-1"/>
    <property type="organism name" value="mouse"/>
</dbReference>
<dbReference type="AGR" id="MGI:98663"/>
<dbReference type="CTD" id="7008"/>
<dbReference type="MGI" id="MGI:98663">
    <property type="gene designation" value="Tef"/>
</dbReference>
<dbReference type="VEuPathDB" id="HostDB:ENSMUSG00000022389"/>
<dbReference type="eggNOG" id="KOG3119">
    <property type="taxonomic scope" value="Eukaryota"/>
</dbReference>
<dbReference type="GeneTree" id="ENSGT00940000156578"/>
<dbReference type="HOGENOM" id="CLU_051922_2_0_1"/>
<dbReference type="InParanoid" id="Q9JLC6"/>
<dbReference type="OMA" id="LMENPRE"/>
<dbReference type="OrthoDB" id="6022300at2759"/>
<dbReference type="PhylomeDB" id="Q9JLC6"/>
<dbReference type="TreeFam" id="TF315869"/>
<dbReference type="BioGRID-ORCS" id="21685">
    <property type="hits" value="2 hits in 79 CRISPR screens"/>
</dbReference>
<dbReference type="ChiTaRS" id="Tef">
    <property type="organism name" value="mouse"/>
</dbReference>
<dbReference type="PRO" id="PR:Q9JLC6"/>
<dbReference type="Proteomes" id="UP000000589">
    <property type="component" value="Chromosome 15"/>
</dbReference>
<dbReference type="RNAct" id="Q9JLC6">
    <property type="molecule type" value="protein"/>
</dbReference>
<dbReference type="Bgee" id="ENSMUSG00000022389">
    <property type="expression patterns" value="Expressed in superior frontal gyrus and 266 other cell types or tissues"/>
</dbReference>
<dbReference type="ExpressionAtlas" id="Q9JLC6">
    <property type="expression patterns" value="baseline and differential"/>
</dbReference>
<dbReference type="GO" id="GO:0005634">
    <property type="term" value="C:nucleus"/>
    <property type="evidence" value="ECO:0007669"/>
    <property type="project" value="UniProtKB-SubCell"/>
</dbReference>
<dbReference type="GO" id="GO:0003700">
    <property type="term" value="F:DNA-binding transcription factor activity"/>
    <property type="evidence" value="ECO:0007669"/>
    <property type="project" value="InterPro"/>
</dbReference>
<dbReference type="GO" id="GO:0003690">
    <property type="term" value="F:double-stranded DNA binding"/>
    <property type="evidence" value="ECO:0000314"/>
    <property type="project" value="MGI"/>
</dbReference>
<dbReference type="GO" id="GO:1990837">
    <property type="term" value="F:sequence-specific double-stranded DNA binding"/>
    <property type="evidence" value="ECO:0007669"/>
    <property type="project" value="Ensembl"/>
</dbReference>
<dbReference type="GO" id="GO:0045944">
    <property type="term" value="P:positive regulation of transcription by RNA polymerase II"/>
    <property type="evidence" value="ECO:0000314"/>
    <property type="project" value="MGI"/>
</dbReference>
<dbReference type="GO" id="GO:0048511">
    <property type="term" value="P:rhythmic process"/>
    <property type="evidence" value="ECO:0007669"/>
    <property type="project" value="UniProtKB-KW"/>
</dbReference>
<dbReference type="CDD" id="cd14695">
    <property type="entry name" value="bZIP_HLF"/>
    <property type="match status" value="1"/>
</dbReference>
<dbReference type="FunFam" id="1.20.5.170:FF:000007">
    <property type="entry name" value="hepatic leukemia factor isoform X2"/>
    <property type="match status" value="1"/>
</dbReference>
<dbReference type="Gene3D" id="1.20.5.170">
    <property type="match status" value="1"/>
</dbReference>
<dbReference type="InterPro" id="IPR004827">
    <property type="entry name" value="bZIP"/>
</dbReference>
<dbReference type="InterPro" id="IPR046347">
    <property type="entry name" value="bZIP_sf"/>
</dbReference>
<dbReference type="InterPro" id="IPR040223">
    <property type="entry name" value="PAR_bZIP"/>
</dbReference>
<dbReference type="PANTHER" id="PTHR11988:SF24">
    <property type="entry name" value="THYROTROPH EMBRYONIC FACTOR"/>
    <property type="match status" value="1"/>
</dbReference>
<dbReference type="PANTHER" id="PTHR11988">
    <property type="entry name" value="THYROTROPH EMBRYONIC FACTOR RELATED"/>
    <property type="match status" value="1"/>
</dbReference>
<dbReference type="Pfam" id="PF07716">
    <property type="entry name" value="bZIP_2"/>
    <property type="match status" value="1"/>
</dbReference>
<dbReference type="SMART" id="SM00338">
    <property type="entry name" value="BRLZ"/>
    <property type="match status" value="1"/>
</dbReference>
<dbReference type="SUPFAM" id="SSF57959">
    <property type="entry name" value="Leucine zipper domain"/>
    <property type="match status" value="1"/>
</dbReference>
<dbReference type="PROSITE" id="PS50217">
    <property type="entry name" value="BZIP"/>
    <property type="match status" value="1"/>
</dbReference>
<name>TEF_MOUSE</name>
<proteinExistence type="evidence at transcript level"/>
<sequence length="301" mass="33145">MSDAGGGKKPPVEPQAGPGPGRAAGERGLSGSFPLVLKKLMENPPRETRLDKEKGKEKLEEDESAAASTMAVSASLMPPIWDKTIPYDGESFHLEYMDLDEFLLENGIPASPTHLAQNLLLPVAELEGKESASSSTASPPSSSTAIFQPSETVSSTESSLEKERETPSPIDPSCVEVDVNFNPDPADLVLSSVPGGELFNPRKHRFAEEDLKPQPMIKKAKKVFVPDEQKDEKYWTRRKKNNVAAKRSRDARRLKENQITIRAAFLEKENTALRTEVAELRKEVGKCKTIVSKYETKYGPL</sequence>
<feature type="chain" id="PRO_0000076513" description="Thyrotroph embryonic factor">
    <location>
        <begin position="1"/>
        <end position="301"/>
    </location>
</feature>
<feature type="domain" description="bZIP" evidence="3">
    <location>
        <begin position="231"/>
        <end position="294"/>
    </location>
</feature>
<feature type="region of interest" description="Disordered" evidence="4">
    <location>
        <begin position="1"/>
        <end position="70"/>
    </location>
</feature>
<feature type="region of interest" description="Disordered" evidence="4">
    <location>
        <begin position="130"/>
        <end position="174"/>
    </location>
</feature>
<feature type="region of interest" description="Basic motif" evidence="3">
    <location>
        <begin position="233"/>
        <end position="253"/>
    </location>
</feature>
<feature type="region of interest" description="Leucine-zipper" evidence="3">
    <location>
        <begin position="254"/>
        <end position="261"/>
    </location>
</feature>
<feature type="compositionally biased region" description="Basic and acidic residues" evidence="4">
    <location>
        <begin position="39"/>
        <end position="59"/>
    </location>
</feature>
<feature type="compositionally biased region" description="Low complexity" evidence="4">
    <location>
        <begin position="131"/>
        <end position="158"/>
    </location>
</feature>
<feature type="modified residue" description="Phosphoserine" evidence="2">
    <location>
        <position position="30"/>
    </location>
</feature>
<feature type="splice variant" id="VSP_011246" description="In isoform 2." evidence="6">
    <original>MSDAGGGKKPPVEPQAGPGPGRAAGERGLSGSFPLVLKKLMENPPRETRL</original>
    <variation>MDMPEVLKSLLEHSLPWSEKKA</variation>
    <location>
        <begin position="1"/>
        <end position="50"/>
    </location>
</feature>
<feature type="splice variant" id="VSP_011245" description="In isoform Beta." evidence="5 7">
    <original>MSDAGGGKKPPVEPQAGPGPGRAAGERGLSGSFPLVLKKLMENPPRETRL</original>
    <variation>MSSCSQIGVAPAMDMPEVLKSLLEHSLPWSEKKA</variation>
    <location>
        <begin position="1"/>
        <end position="50"/>
    </location>
</feature>
<feature type="sequence conflict" description="In Ref. 3; BAE26249." evidence="8" ref="3">
    <original>K</original>
    <variation>R</variation>
    <location>
        <position position="38"/>
    </location>
</feature>
<feature type="sequence conflict" description="In Ref. 3; BAC35849." evidence="8" ref="3">
    <original>M</original>
    <variation>V</variation>
    <location>
        <position position="97"/>
    </location>
</feature>
<feature type="sequence conflict" description="In Ref. 3; BAE28255." evidence="8" ref="3">
    <original>S</original>
    <variation>C</variation>
    <location>
        <position position="191"/>
    </location>
</feature>
<feature type="sequence conflict" description="In Ref. 3; BAE26249." evidence="8" ref="3">
    <original>K</original>
    <variation>E</variation>
    <location>
        <position position="219"/>
    </location>
</feature>
<feature type="sequence conflict" description="In Ref. 3; BAE26249." evidence="8" ref="3">
    <original>F</original>
    <variation>L</variation>
    <location>
        <position position="224"/>
    </location>
</feature>
<evidence type="ECO:0000250" key="1"/>
<evidence type="ECO:0000250" key="2">
    <source>
        <dbReference type="UniProtKB" id="Q10587"/>
    </source>
</evidence>
<evidence type="ECO:0000255" key="3">
    <source>
        <dbReference type="PROSITE-ProRule" id="PRU00978"/>
    </source>
</evidence>
<evidence type="ECO:0000256" key="4">
    <source>
        <dbReference type="SAM" id="MobiDB-lite"/>
    </source>
</evidence>
<evidence type="ECO:0000303" key="5">
    <source>
    </source>
</evidence>
<evidence type="ECO:0000303" key="6">
    <source>
    </source>
</evidence>
<evidence type="ECO:0000303" key="7">
    <source>
    </source>
</evidence>
<evidence type="ECO:0000305" key="8"/>
<organism>
    <name type="scientific">Mus musculus</name>
    <name type="common">Mouse</name>
    <dbReference type="NCBI Taxonomy" id="10090"/>
    <lineage>
        <taxon>Eukaryota</taxon>
        <taxon>Metazoa</taxon>
        <taxon>Chordata</taxon>
        <taxon>Craniata</taxon>
        <taxon>Vertebrata</taxon>
        <taxon>Euteleostomi</taxon>
        <taxon>Mammalia</taxon>
        <taxon>Eutheria</taxon>
        <taxon>Euarchontoglires</taxon>
        <taxon>Glires</taxon>
        <taxon>Rodentia</taxon>
        <taxon>Myomorpha</taxon>
        <taxon>Muroidea</taxon>
        <taxon>Muridae</taxon>
        <taxon>Murinae</taxon>
        <taxon>Mus</taxon>
        <taxon>Mus</taxon>
    </lineage>
</organism>
<gene>
    <name type="primary">Tef</name>
</gene>
<accession>Q9JLC6</accession>
<accession>Q3U426</accession>
<accession>Q3UGF4</accession>
<accession>Q3UM49</accession>
<accession>Q3URC8</accession>
<accession>Q6QHT6</accession>
<accession>Q8C6I0</accession>
<accession>Q8VD02</accession>